<gene>
    <name type="ordered locus">Tfu_0541</name>
</gene>
<keyword id="KW-1003">Cell membrane</keyword>
<keyword id="KW-0472">Membrane</keyword>
<keyword id="KW-0812">Transmembrane</keyword>
<keyword id="KW-1133">Transmembrane helix</keyword>
<dbReference type="EMBL" id="CP000088">
    <property type="protein sequence ID" value="AAZ54579.1"/>
    <property type="molecule type" value="Genomic_DNA"/>
</dbReference>
<dbReference type="SMR" id="Q47SI8"/>
<dbReference type="KEGG" id="tfu:Tfu_0541"/>
<dbReference type="eggNOG" id="COG1615">
    <property type="taxonomic scope" value="Bacteria"/>
</dbReference>
<dbReference type="HOGENOM" id="CLU_007733_1_0_11"/>
<dbReference type="OrthoDB" id="9763654at2"/>
<dbReference type="GO" id="GO:0005576">
    <property type="term" value="C:extracellular region"/>
    <property type="evidence" value="ECO:0007669"/>
    <property type="project" value="TreeGrafter"/>
</dbReference>
<dbReference type="GO" id="GO:0005886">
    <property type="term" value="C:plasma membrane"/>
    <property type="evidence" value="ECO:0007669"/>
    <property type="project" value="UniProtKB-SubCell"/>
</dbReference>
<dbReference type="HAMAP" id="MF_01600">
    <property type="entry name" value="UPF0182"/>
    <property type="match status" value="1"/>
</dbReference>
<dbReference type="InterPro" id="IPR005372">
    <property type="entry name" value="UPF0182"/>
</dbReference>
<dbReference type="PANTHER" id="PTHR39344">
    <property type="entry name" value="UPF0182 PROTEIN SLL1060"/>
    <property type="match status" value="1"/>
</dbReference>
<dbReference type="PANTHER" id="PTHR39344:SF1">
    <property type="entry name" value="UPF0182 PROTEIN SLL1060"/>
    <property type="match status" value="1"/>
</dbReference>
<dbReference type="Pfam" id="PF03699">
    <property type="entry name" value="UPF0182"/>
    <property type="match status" value="2"/>
</dbReference>
<reference key="1">
    <citation type="journal article" date="2007" name="J. Bacteriol.">
        <title>Genome sequence and analysis of the soil cellulolytic actinomycete Thermobifida fusca YX.</title>
        <authorList>
            <person name="Lykidis A."/>
            <person name="Mavromatis K."/>
            <person name="Ivanova N."/>
            <person name="Anderson I."/>
            <person name="Land M."/>
            <person name="DiBartolo G."/>
            <person name="Martinez M."/>
            <person name="Lapidus A."/>
            <person name="Lucas S."/>
            <person name="Copeland A."/>
            <person name="Richardson P."/>
            <person name="Wilson D.B."/>
            <person name="Kyrpides N."/>
        </authorList>
    </citation>
    <scope>NUCLEOTIDE SEQUENCE [LARGE SCALE GENOMIC DNA]</scope>
    <source>
        <strain>YX</strain>
    </source>
</reference>
<name>Y541_THEFY</name>
<evidence type="ECO:0000255" key="1">
    <source>
        <dbReference type="HAMAP-Rule" id="MF_01600"/>
    </source>
</evidence>
<evidence type="ECO:0000256" key="2">
    <source>
        <dbReference type="SAM" id="MobiDB-lite"/>
    </source>
</evidence>
<organism>
    <name type="scientific">Thermobifida fusca (strain YX)</name>
    <dbReference type="NCBI Taxonomy" id="269800"/>
    <lineage>
        <taxon>Bacteria</taxon>
        <taxon>Bacillati</taxon>
        <taxon>Actinomycetota</taxon>
        <taxon>Actinomycetes</taxon>
        <taxon>Streptosporangiales</taxon>
        <taxon>Nocardiopsidaceae</taxon>
        <taxon>Thermobifida</taxon>
    </lineage>
</organism>
<comment type="subcellular location">
    <subcellularLocation>
        <location evidence="1">Cell membrane</location>
        <topology evidence="1">Multi-pass membrane protein</topology>
    </subcellularLocation>
</comment>
<comment type="similarity">
    <text evidence="1">Belongs to the UPF0182 family.</text>
</comment>
<accession>Q47SI8</accession>
<feature type="chain" id="PRO_0000291302" description="UPF0182 protein Tfu_0541">
    <location>
        <begin position="1"/>
        <end position="1018"/>
    </location>
</feature>
<feature type="transmembrane region" description="Helical" evidence="1">
    <location>
        <begin position="20"/>
        <end position="40"/>
    </location>
</feature>
<feature type="transmembrane region" description="Helical" evidence="1">
    <location>
        <begin position="64"/>
        <end position="84"/>
    </location>
</feature>
<feature type="transmembrane region" description="Helical" evidence="1">
    <location>
        <begin position="115"/>
        <end position="135"/>
    </location>
</feature>
<feature type="transmembrane region" description="Helical" evidence="1">
    <location>
        <begin position="171"/>
        <end position="191"/>
    </location>
</feature>
<feature type="transmembrane region" description="Helical" evidence="1">
    <location>
        <begin position="212"/>
        <end position="232"/>
    </location>
</feature>
<feature type="transmembrane region" description="Helical" evidence="1">
    <location>
        <begin position="254"/>
        <end position="274"/>
    </location>
</feature>
<feature type="transmembrane region" description="Helical" evidence="1">
    <location>
        <begin position="287"/>
        <end position="307"/>
    </location>
</feature>
<feature type="region of interest" description="Disordered" evidence="2">
    <location>
        <begin position="497"/>
        <end position="570"/>
    </location>
</feature>
<feature type="region of interest" description="Disordered" evidence="2">
    <location>
        <begin position="939"/>
        <end position="965"/>
    </location>
</feature>
<feature type="compositionally biased region" description="Acidic residues" evidence="2">
    <location>
        <begin position="542"/>
        <end position="560"/>
    </location>
</feature>
<feature type="compositionally biased region" description="Acidic residues" evidence="2">
    <location>
        <begin position="939"/>
        <end position="959"/>
    </location>
</feature>
<sequence length="1018" mass="112018">MSFRSPGAPTARMPRRSRLLAPVGAAVVVIIAGIMFAANFWTEYRWFGSVGYTTVFWTELRTRALLFAGGALLMALAVGLSVYFAYRTRPAYRPFSLEQQGLDRYRSSIDPHRKVFFWGLVGGLALLTGASATAEWQTFLQFANATKFGAQDAQFGLDISFYTFTYPFLQVIIGYLYTAVVIAFIAGVVVHYLYGGVRLQAQGQRVTPAARVHLSVLLGVFLLLRAADYWLEQYGLVFSNRGYTFGASYTDVNAVLYAKIILFFIALVCAVLFFANIYFKNARVPLVSLGLMVLSAILIGGVYPAIVQQVTVSPNEQRLERPYIQRNIEATRAAYGIDGAEVIDYDAQTELTTAELAAEAETIPSVRLVDPAVVSQTFQQLQQVRGFYQFPQVLEVDRYTTSDGETVDTIVAARELDGPPSQEDRWLTRHLVYTHGFGMVAAAGNQVDSEGRPVFLEYNIPPTGELSQVGEGYEPRIYFGREGAEYVIVNAEAEYDYPVDPDTPEVPTTEDAVVPTPSPSPEADEAPAPADSREEGSAQEQQDQEGQDGGEDAQGTEEEQSGQGSGQANNYYDGKGGVQLKSFFDKLMYALKYQEINILLNNAISNESQIIYVRDPAERVEKVAPFLTVDGKAYPAVVDGRIVWIVDAYTTSDRYPYSTPIDLAQATTDTFTESTTAVNALPGNRVNYIRNSVKATVDAYDGTVTLYGWDEEDPVLQTWSKAFPGVVTSKDEISDTLLSHLRYPDDLYKVQREILERYHITNADAFYGGQDFWTVPNDPKPQAGNNPEPPYRQTIRFPGDDTPTYSLTSTFVPRGRENLAAFMAVNSDASSEDYGQMRILELPRSTAVQGPGQIQNTFQSSAEVREVLLPLEQSSAQVTYGNLLTLPFAGGLLYVEPLYVQAGGSDASYPLLQQVLVGFGDQVAIGSNLQEALNNLFDGDEAPLEEPTTDGEAREEEEQPQASSDLAQALEDAAEAYEEGQAALREGDFAAYGEANERLKEALDRAKAASGSNEEKDE</sequence>
<proteinExistence type="inferred from homology"/>
<protein>
    <recommendedName>
        <fullName evidence="1">UPF0182 protein Tfu_0541</fullName>
    </recommendedName>
</protein>